<proteinExistence type="inferred from homology"/>
<name>MCP_RTRV</name>
<evidence type="ECO:0000250" key="1"/>
<evidence type="ECO:0000305" key="2"/>
<reference key="1">
    <citation type="submission" date="2001-04" db="EMBL/GenBank/DDBJ databases">
        <title>Amplification, cloning and sequence analysis of a newly isolated vertebrate iridovirus.</title>
        <authorList>
            <person name="Miao S."/>
            <person name="He J."/>
            <person name="Zhang L."/>
            <person name="Wang X."/>
            <person name="Zhang M."/>
            <person name="Jiang J."/>
        </authorList>
    </citation>
    <scope>NUCLEOTIDE SEQUENCE [GENOMIC DNA]</scope>
</reference>
<protein>
    <recommendedName>
        <fullName>Major capsid protein</fullName>
        <shortName>MCP</shortName>
    </recommendedName>
    <alternativeName>
        <fullName>P50</fullName>
    </alternativeName>
</protein>
<organism>
    <name type="scientific">Rana tigrina ranavirus</name>
    <dbReference type="NCBI Taxonomy" id="160691"/>
    <lineage>
        <taxon>Viruses</taxon>
        <taxon>Varidnaviria</taxon>
        <taxon>Bamfordvirae</taxon>
        <taxon>Nucleocytoviricota</taxon>
        <taxon>Megaviricetes</taxon>
        <taxon>Pimascovirales</taxon>
        <taxon>Iridoviridae</taxon>
        <taxon>Alphairidovirinae</taxon>
        <taxon>Ranavirus</taxon>
        <taxon>Frog virus 3</taxon>
    </lineage>
</organism>
<sequence length="463" mass="49923">MSSVTGSGITSGFIDLATYDNLERAMYGGSDATTYFVKEHYPVGWFTKLPSLAAKMSGNPAFGQQFSVGVPRSGDYILNAWLVLKTPEVELLAANQLGENGTIRWTKNPMHNIVESVTLSFNDISAQSFNTAYLDAWSEYTMPEAKRIGYYNMIGNTSDLINPAPATGQDGARVLPAKNLVLPLPFFFSRDSGLALPVVSLPYNEIRITVKLRAIQDLLILQHNTTGAISPIVASDLAGGLPDTVEANVYMTVALITGDERQAMSSTVRDMVVEQVQVAPVHMVNPRNAATFHTDMRFSHAVKALMFMVQNVTHPSVGSNYTCVTPVVGAGNTVLEPALAVDPVKSASLVYENTTRLPDMGVEYYSLVEPWYYATSIPVSTGHHLYSYALSMQDPHPSGSTNYGRLTNASLNVTLSAEATTAAAGGGGDNSGYTTAQKYALIVLAINHNIIRIMNGSMGFPIL</sequence>
<keyword id="KW-0167">Capsid protein</keyword>
<keyword id="KW-0426">Late protein</keyword>
<keyword id="KW-0946">Virion</keyword>
<feature type="chain" id="PRO_0000222385" description="Major capsid protein">
    <location>
        <begin position="1"/>
        <end position="463"/>
    </location>
</feature>
<dbReference type="EMBL" id="AY033630">
    <property type="protein sequence ID" value="AAK55105.1"/>
    <property type="molecule type" value="Genomic_DNA"/>
</dbReference>
<dbReference type="SMR" id="Q91QZ8"/>
<dbReference type="GO" id="GO:0019028">
    <property type="term" value="C:viral capsid"/>
    <property type="evidence" value="ECO:0007669"/>
    <property type="project" value="UniProtKB-KW"/>
</dbReference>
<dbReference type="GO" id="GO:0005198">
    <property type="term" value="F:structural molecule activity"/>
    <property type="evidence" value="ECO:0007669"/>
    <property type="project" value="InterPro"/>
</dbReference>
<dbReference type="Gene3D" id="2.70.9.10">
    <property type="entry name" value="Adenovirus Type 2 Hexon, domain 4"/>
    <property type="match status" value="1"/>
</dbReference>
<dbReference type="Gene3D" id="2.70.9.20">
    <property type="entry name" value="Major capsid protein Vp54"/>
    <property type="match status" value="1"/>
</dbReference>
<dbReference type="InterPro" id="IPR031654">
    <property type="entry name" value="Capsid_N"/>
</dbReference>
<dbReference type="InterPro" id="IPR007542">
    <property type="entry name" value="MCP_C"/>
</dbReference>
<dbReference type="InterPro" id="IPR038519">
    <property type="entry name" value="MCP_C_sf"/>
</dbReference>
<dbReference type="InterPro" id="IPR016112">
    <property type="entry name" value="VP_dsDNA_II"/>
</dbReference>
<dbReference type="Pfam" id="PF16903">
    <property type="entry name" value="Capsid_N"/>
    <property type="match status" value="1"/>
</dbReference>
<dbReference type="Pfam" id="PF04451">
    <property type="entry name" value="Capsid_NCLDV"/>
    <property type="match status" value="1"/>
</dbReference>
<dbReference type="SUPFAM" id="SSF49749">
    <property type="entry name" value="Group II dsDNA viruses VP"/>
    <property type="match status" value="2"/>
</dbReference>
<gene>
    <name type="primary">MCP</name>
</gene>
<accession>Q91QZ8</accession>
<comment type="function">
    <text evidence="1">Major capsid protein that self assembles to form an icosahedral capsid. Represents around 50% of the total virion protein mass (By similarity).</text>
</comment>
<comment type="subunit">
    <text evidence="1">Homotrimer.</text>
</comment>
<comment type="subcellular location">
    <subcellularLocation>
        <location evidence="2">Virion</location>
    </subcellularLocation>
</comment>
<comment type="similarity">
    <text evidence="2">Belongs to the NCLDV major capsid protein family.</text>
</comment>
<organismHost>
    <name type="scientific">Hoplobatrachus tigerinus</name>
    <name type="common">Indian bull frog</name>
    <name type="synonym">Rana tigerina</name>
    <dbReference type="NCBI Taxonomy" id="103373"/>
</organismHost>